<accession>Q2I2Q9</accession>
<organism>
    <name type="scientific">Conus litteratus</name>
    <name type="common">Lettered cone</name>
    <dbReference type="NCBI Taxonomy" id="89445"/>
    <lineage>
        <taxon>Eukaryota</taxon>
        <taxon>Metazoa</taxon>
        <taxon>Spiralia</taxon>
        <taxon>Lophotrochozoa</taxon>
        <taxon>Mollusca</taxon>
        <taxon>Gastropoda</taxon>
        <taxon>Caenogastropoda</taxon>
        <taxon>Neogastropoda</taxon>
        <taxon>Conoidea</taxon>
        <taxon>Conidae</taxon>
        <taxon>Conus</taxon>
        <taxon>Elisaconus</taxon>
    </lineage>
</organism>
<protein>
    <recommendedName>
        <fullName>Conotoxin Lt7.1</fullName>
    </recommendedName>
    <alternativeName>
        <fullName>Lt7a</fullName>
    </alternativeName>
</protein>
<comment type="subcellular location">
    <subcellularLocation>
        <location evidence="1">Secreted</location>
    </subcellularLocation>
</comment>
<comment type="tissue specificity">
    <text>Expressed by the venom duct.</text>
</comment>
<comment type="domain">
    <text evidence="1">The presence of a 'disulfide through disulfide knot' structurally defines this protein as a knottin.</text>
</comment>
<comment type="domain">
    <text>The cysteine framework is VI/VII (C-C-CC-C-C).</text>
</comment>
<comment type="similarity">
    <text evidence="3">Belongs to the conotoxin O2 superfamily.</text>
</comment>
<sequence length="77" mass="8689">MEKLTILLLVAALLMSTQGLIQSGGENRPKEKIKFLSKRKTVAESWWEGECLGWSNYCTSHSICCSGECILSYCDIW</sequence>
<feature type="signal peptide" evidence="2">
    <location>
        <begin position="1"/>
        <end position="19"/>
    </location>
</feature>
<feature type="propeptide" id="PRO_0000315502" evidence="3">
    <location>
        <begin position="20"/>
        <end position="49"/>
    </location>
</feature>
<feature type="peptide" id="PRO_0000315503" description="Conotoxin Lt7.1">
    <location>
        <begin position="50"/>
        <end position="77"/>
    </location>
</feature>
<feature type="disulfide bond" evidence="1">
    <location>
        <begin position="51"/>
        <end position="65"/>
    </location>
</feature>
<feature type="disulfide bond" evidence="1">
    <location>
        <begin position="58"/>
        <end position="69"/>
    </location>
</feature>
<feature type="disulfide bond" evidence="1">
    <location>
        <begin position="64"/>
        <end position="74"/>
    </location>
</feature>
<keyword id="KW-1015">Disulfide bond</keyword>
<keyword id="KW-0960">Knottin</keyword>
<keyword id="KW-0964">Secreted</keyword>
<keyword id="KW-0732">Signal</keyword>
<keyword id="KW-0800">Toxin</keyword>
<name>O271_CONLT</name>
<reference key="1">
    <citation type="journal article" date="2006" name="Genomics">
        <title>Diversity and evolution of conotoxins based on gene expression profiling of Conus litteratus.</title>
        <authorList>
            <person name="Pi C."/>
            <person name="Liu J."/>
            <person name="Peng C."/>
            <person name="Liu Y."/>
            <person name="Jiang X."/>
            <person name="Zhao Y."/>
            <person name="Tang S."/>
            <person name="Wang L."/>
            <person name="Dong M."/>
            <person name="Chen S."/>
            <person name="Xu A."/>
        </authorList>
    </citation>
    <scope>NUCLEOTIDE SEQUENCE [MRNA]</scope>
    <source>
        <tissue>Venom duct</tissue>
    </source>
</reference>
<proteinExistence type="evidence at transcript level"/>
<evidence type="ECO:0000250" key="1"/>
<evidence type="ECO:0000255" key="2"/>
<evidence type="ECO:0000305" key="3"/>
<dbReference type="EMBL" id="DQ345373">
    <property type="protein sequence ID" value="ABC74981.1"/>
    <property type="molecule type" value="mRNA"/>
</dbReference>
<dbReference type="ConoServer" id="1159">
    <property type="toxin name" value="LtVIIA precursor"/>
</dbReference>
<dbReference type="GO" id="GO:0005576">
    <property type="term" value="C:extracellular region"/>
    <property type="evidence" value="ECO:0007669"/>
    <property type="project" value="UniProtKB-SubCell"/>
</dbReference>
<dbReference type="GO" id="GO:0008200">
    <property type="term" value="F:ion channel inhibitor activity"/>
    <property type="evidence" value="ECO:0007669"/>
    <property type="project" value="InterPro"/>
</dbReference>
<dbReference type="GO" id="GO:0090729">
    <property type="term" value="F:toxin activity"/>
    <property type="evidence" value="ECO:0007669"/>
    <property type="project" value="UniProtKB-KW"/>
</dbReference>
<dbReference type="InterPro" id="IPR004214">
    <property type="entry name" value="Conotoxin"/>
</dbReference>
<dbReference type="Pfam" id="PF02950">
    <property type="entry name" value="Conotoxin"/>
    <property type="match status" value="1"/>
</dbReference>